<dbReference type="EC" id="3.3.2.10" evidence="3"/>
<dbReference type="EMBL" id="EU151492">
    <property type="protein sequence ID" value="ABV45407.1"/>
    <property type="molecule type" value="mRNA"/>
</dbReference>
<dbReference type="EMBL" id="BX284605">
    <property type="protein sequence ID" value="CAA94898.1"/>
    <property type="molecule type" value="Genomic_DNA"/>
</dbReference>
<dbReference type="PIR" id="T23406">
    <property type="entry name" value="T23406"/>
</dbReference>
<dbReference type="RefSeq" id="NP_001256211.1">
    <property type="nucleotide sequence ID" value="NM_001269282.2"/>
</dbReference>
<dbReference type="SMR" id="G5EDL5"/>
<dbReference type="FunCoup" id="G5EDL5">
    <property type="interactions" value="27"/>
</dbReference>
<dbReference type="STRING" id="6239.K07C5.5.1"/>
<dbReference type="ESTHER" id="caeel-K07C5.5">
    <property type="family name" value="Epoxide_hydrolase"/>
</dbReference>
<dbReference type="PaxDb" id="6239-K07C5.5a"/>
<dbReference type="PeptideAtlas" id="G5EDL5"/>
<dbReference type="EnsemblMetazoa" id="K07C5.5.1">
    <property type="protein sequence ID" value="K07C5.5.1"/>
    <property type="gene ID" value="WBGene00010628"/>
</dbReference>
<dbReference type="GeneID" id="179444"/>
<dbReference type="KEGG" id="cel:CELE_K07C5.5"/>
<dbReference type="AGR" id="WB:WBGene00010628"/>
<dbReference type="CTD" id="179444"/>
<dbReference type="WormBase" id="K07C5.5">
    <property type="protein sequence ID" value="CE06115"/>
    <property type="gene ID" value="WBGene00010628"/>
    <property type="gene designation" value="ceeh-2"/>
</dbReference>
<dbReference type="eggNOG" id="KOG4178">
    <property type="taxonomic scope" value="Eukaryota"/>
</dbReference>
<dbReference type="GeneTree" id="ENSGT00940000167498"/>
<dbReference type="InParanoid" id="G5EDL5"/>
<dbReference type="OMA" id="HVTGDYR"/>
<dbReference type="OrthoDB" id="408373at2759"/>
<dbReference type="PhylomeDB" id="G5EDL5"/>
<dbReference type="SABIO-RK" id="G5EDL5"/>
<dbReference type="PRO" id="PR:G5EDL5"/>
<dbReference type="Proteomes" id="UP000001940">
    <property type="component" value="Chromosome V"/>
</dbReference>
<dbReference type="Bgee" id="WBGene00010628">
    <property type="expression patterns" value="Expressed in larva and 2 other cell types or tissues"/>
</dbReference>
<dbReference type="GO" id="GO:0004301">
    <property type="term" value="F:epoxide hydrolase activity"/>
    <property type="evidence" value="ECO:0000314"/>
    <property type="project" value="WormBase"/>
</dbReference>
<dbReference type="GO" id="GO:0016787">
    <property type="term" value="F:hydrolase activity"/>
    <property type="evidence" value="ECO:0000318"/>
    <property type="project" value="GO_Central"/>
</dbReference>
<dbReference type="GO" id="GO:0006629">
    <property type="term" value="P:lipid metabolic process"/>
    <property type="evidence" value="ECO:0000314"/>
    <property type="project" value="WormBase"/>
</dbReference>
<dbReference type="Gene3D" id="3.40.50.1820">
    <property type="entry name" value="alpha/beta hydrolase"/>
    <property type="match status" value="1"/>
</dbReference>
<dbReference type="InterPro" id="IPR000073">
    <property type="entry name" value="AB_hydrolase_1"/>
</dbReference>
<dbReference type="InterPro" id="IPR029058">
    <property type="entry name" value="AB_hydrolase_fold"/>
</dbReference>
<dbReference type="InterPro" id="IPR000639">
    <property type="entry name" value="Epox_hydrolase-like"/>
</dbReference>
<dbReference type="PANTHER" id="PTHR43329">
    <property type="entry name" value="EPOXIDE HYDROLASE"/>
    <property type="match status" value="1"/>
</dbReference>
<dbReference type="Pfam" id="PF00561">
    <property type="entry name" value="Abhydrolase_1"/>
    <property type="match status" value="1"/>
</dbReference>
<dbReference type="PRINTS" id="PR00412">
    <property type="entry name" value="EPOXHYDRLASE"/>
</dbReference>
<dbReference type="SUPFAM" id="SSF53474">
    <property type="entry name" value="alpha/beta-Hydrolases"/>
    <property type="match status" value="1"/>
</dbReference>
<comment type="function">
    <text evidence="3">Catalyzes the hydrolysis of epoxide-containing fatty acids. Active in vitro against trans-1,3-diphenylpropene oxide (t-DPPO), epoxyeicosatrienoic acids (EETs) including 8,9-EET, 11,12-EET and 14,15-EET and the linoleic acid metabolites 12,13-epoxy-9-octadecenoate (12,13-EpOME) and 9,10-epoxy-12-octadecenoate (9,10-EpOME).</text>
</comment>
<comment type="catalytic activity">
    <reaction evidence="3">
        <text>an epoxide + H2O = an ethanediol</text>
        <dbReference type="Rhea" id="RHEA:19037"/>
        <dbReference type="ChEBI" id="CHEBI:15377"/>
        <dbReference type="ChEBI" id="CHEBI:32955"/>
        <dbReference type="ChEBI" id="CHEBI:140594"/>
        <dbReference type="EC" id="3.3.2.10"/>
    </reaction>
</comment>
<comment type="biophysicochemical properties">
    <kinetics>
        <KM evidence="3">1.9 uM for 12,13-epoxy-9-octadecenoate</KM>
        <KM evidence="3">8.4 uM for 9,10-epoxy-12-octadecenoate</KM>
    </kinetics>
</comment>
<comment type="pathway">
    <text evidence="5">Lipid metabolism.</text>
</comment>
<comment type="disruption phenotype">
    <text evidence="3">RNAi knockdown of both ceeh-1 and ceeh-2 results in the accumulation of 9,10-EpOME and 12,13-EpOME.</text>
</comment>
<comment type="miscellaneous">
    <text evidence="3">Less active when compared to ceeh-1.</text>
</comment>
<comment type="similarity">
    <text evidence="4">Belongs to the AB hydrolase superfamily. Epoxide hydrolase family.</text>
</comment>
<keyword id="KW-0378">Hydrolase</keyword>
<keyword id="KW-0443">Lipid metabolism</keyword>
<keyword id="KW-1185">Reference proteome</keyword>
<proteinExistence type="evidence at protein level"/>
<organism evidence="7">
    <name type="scientific">Caenorhabditis elegans</name>
    <dbReference type="NCBI Taxonomy" id="6239"/>
    <lineage>
        <taxon>Eukaryota</taxon>
        <taxon>Metazoa</taxon>
        <taxon>Ecdysozoa</taxon>
        <taxon>Nematoda</taxon>
        <taxon>Chromadorea</taxon>
        <taxon>Rhabditida</taxon>
        <taxon>Rhabditina</taxon>
        <taxon>Rhabditomorpha</taxon>
        <taxon>Rhabditoidea</taxon>
        <taxon>Rhabditidae</taxon>
        <taxon>Peloderinae</taxon>
        <taxon>Caenorhabditis</taxon>
    </lineage>
</organism>
<gene>
    <name evidence="8" type="primary">ceeh-2</name>
    <name evidence="8" type="ORF">K07C5.5</name>
</gene>
<name>CEEH2_CAEEL</name>
<accession>G5EDL5</accession>
<accession>G1K0X1</accession>
<protein>
    <recommendedName>
        <fullName evidence="8">Epoxide hydrolase 2</fullName>
        <ecNumber evidence="3">3.3.2.10</ecNumber>
    </recommendedName>
</protein>
<reference evidence="6" key="1">
    <citation type="journal article" date="2008" name="Arch. Biochem. Biophys.">
        <title>Identification of two epoxide hydrolases in Caenorhabditis elegans that metabolize mammalian lipid signaling molecules.</title>
        <authorList>
            <person name="Harris T.R."/>
            <person name="Aronov P.A."/>
            <person name="Jones P.D."/>
            <person name="Tanaka H."/>
            <person name="Arand M."/>
            <person name="Hammock B.D."/>
        </authorList>
    </citation>
    <scope>NUCLEOTIDE SEQUENCE [MRNA]</scope>
    <scope>FUNCTION</scope>
    <scope>CATALYTIC ACTIVITY</scope>
    <scope>BIOPHYSICOCHEMICAL PROPERTIES</scope>
    <scope>PATHWAY</scope>
    <scope>DISRUPTION PHENOTYPE</scope>
</reference>
<reference evidence="7" key="2">
    <citation type="journal article" date="1998" name="Science">
        <title>Genome sequence of the nematode C. elegans: a platform for investigating biology.</title>
        <authorList>
            <consortium name="The C. elegans sequencing consortium"/>
        </authorList>
    </citation>
    <scope>NUCLEOTIDE SEQUENCE [LARGE SCALE GENOMIC DNA]</scope>
    <source>
        <strain evidence="7">Bristol N2</strain>
    </source>
</reference>
<feature type="chain" id="PRO_0000432073" description="Epoxide hydrolase 2" evidence="4">
    <location>
        <begin position="1"/>
        <end position="355"/>
    </location>
</feature>
<feature type="domain" description="AB hydrolase-1" evidence="2">
    <location>
        <begin position="78"/>
        <end position="323"/>
    </location>
</feature>
<feature type="active site" description="Nucleophile" evidence="1">
    <location>
        <position position="152"/>
    </location>
</feature>
<feature type="active site" description="Proton donor" evidence="1">
    <location>
        <position position="263"/>
    </location>
</feature>
<feature type="active site" description="Proton acceptor" evidence="1">
    <location>
        <position position="319"/>
    </location>
</feature>
<sequence length="355" mass="42116">MGFFADLFKVVYSTWRQYIYTTGALLTLTWKWFTEGNEYFVEHVYPEPECLKNWNHKFVQLKNIRMHYVEEGPADGDVLLMVHGFPEFWYSWRFQLEHFKHTHRCIAIDMRGYNTTDRPSGISDYNLTHLVEDIRQFIEILELKRVTLAAHDWGAIVCWRVAMLHSNLIDRLVICNVPHPFAFFEVYNMSKEQRNKSWYIYLFQSQYIPEIAMRSNKMKMLEAMFRGSKAGIRNSENFTDEDMLAWKHVFSQPGGTTGPLNYYRDLFNAPAIPRKLQIVQPKVLILWGDEDAFLDKKGAELSVQFCRDCRVQMIRGASHWVQQDQPQLVNVYMEQFMNEDSYRPIGEIKTFKSHL</sequence>
<evidence type="ECO:0000250" key="1">
    <source>
        <dbReference type="UniProtKB" id="P34914"/>
    </source>
</evidence>
<evidence type="ECO:0000255" key="2"/>
<evidence type="ECO:0000269" key="3">
    <source>
    </source>
</evidence>
<evidence type="ECO:0000305" key="4"/>
<evidence type="ECO:0000305" key="5">
    <source>
    </source>
</evidence>
<evidence type="ECO:0000312" key="6">
    <source>
        <dbReference type="EMBL" id="ABV45407.1"/>
    </source>
</evidence>
<evidence type="ECO:0000312" key="7">
    <source>
        <dbReference type="Proteomes" id="UP000001940"/>
    </source>
</evidence>
<evidence type="ECO:0000312" key="8">
    <source>
        <dbReference type="WormBase" id="K07C5.5"/>
    </source>
</evidence>